<keyword id="KW-0067">ATP-binding</keyword>
<keyword id="KW-0347">Helicase</keyword>
<keyword id="KW-0378">Hydrolase</keyword>
<keyword id="KW-0547">Nucleotide-binding</keyword>
<keyword id="KW-0539">Nucleus</keyword>
<keyword id="KW-1185">Reference proteome</keyword>
<keyword id="KW-0690">Ribosome biogenesis</keyword>
<keyword id="KW-0694">RNA-binding</keyword>
<keyword id="KW-0698">rRNA processing</keyword>
<evidence type="ECO:0000250" key="1"/>
<evidence type="ECO:0000255" key="2">
    <source>
        <dbReference type="PROSITE-ProRule" id="PRU00541"/>
    </source>
</evidence>
<evidence type="ECO:0000255" key="3">
    <source>
        <dbReference type="PROSITE-ProRule" id="PRU00542"/>
    </source>
</evidence>
<evidence type="ECO:0000305" key="4"/>
<gene>
    <name type="primary">FAL1</name>
    <name type="ORF">MGG_04885</name>
</gene>
<sequence length="401" mass="45552">MAEGSGIDRKAEERMEFTTSKEVTVHPTFESMALKESLLRGIYAYGYESPSAVQSRAIVQVCKGRDTIAQAQSGTGKTATFSISMLQVIDTAVRETQALVLSPTRELATQIQSVVMALGDYMNVQCHACIGGTNVGEDIRKLDYGQHIVSGTPGRVADMIRRRHLRTRHIKMLVLDEADELLNQGFREQIYDVYRYLPPATQVVVVSATLPYDVLDMTTKFMTDPVRILVKRDELTLEGLKQYFIAIEKEDWKFDTLCDLYDTLTITQAVIFCNTRRKVDWLTDKMREANFTVSSMHGDMPQKERDSIMQDFRQGNSRVLISTDVWARGIDVQQVSLVINYDLPSNRENYIHRIGRSGRFGRKGVAINFVTSEDVRILRDIELYYSTQIDEMPMNVADLIA</sequence>
<dbReference type="EC" id="3.6.4.13"/>
<dbReference type="EMBL" id="CM001233">
    <property type="protein sequence ID" value="EHA52561.1"/>
    <property type="molecule type" value="Genomic_DNA"/>
</dbReference>
<dbReference type="RefSeq" id="XP_003712368.1">
    <property type="nucleotide sequence ID" value="XM_003712320.1"/>
</dbReference>
<dbReference type="SMR" id="A4QU31"/>
<dbReference type="FunCoup" id="A4QU31">
    <property type="interactions" value="635"/>
</dbReference>
<dbReference type="STRING" id="242507.A4QU31"/>
<dbReference type="EnsemblFungi" id="MGG_04885T0">
    <property type="protein sequence ID" value="MGG_04885T0"/>
    <property type="gene ID" value="MGG_04885"/>
</dbReference>
<dbReference type="GeneID" id="2675387"/>
<dbReference type="KEGG" id="mgr:MGG_04885"/>
<dbReference type="VEuPathDB" id="FungiDB:MGG_04885"/>
<dbReference type="eggNOG" id="KOG0328">
    <property type="taxonomic scope" value="Eukaryota"/>
</dbReference>
<dbReference type="HOGENOM" id="CLU_003041_1_0_1"/>
<dbReference type="InParanoid" id="A4QU31"/>
<dbReference type="OMA" id="TRFHDFK"/>
<dbReference type="OrthoDB" id="10265785at2759"/>
<dbReference type="Proteomes" id="UP000009058">
    <property type="component" value="Chromosome 3"/>
</dbReference>
<dbReference type="GO" id="GO:0030874">
    <property type="term" value="C:nucleolar chromatin"/>
    <property type="evidence" value="ECO:0007669"/>
    <property type="project" value="EnsemblFungi"/>
</dbReference>
<dbReference type="GO" id="GO:0005524">
    <property type="term" value="F:ATP binding"/>
    <property type="evidence" value="ECO:0007669"/>
    <property type="project" value="UniProtKB-KW"/>
</dbReference>
<dbReference type="GO" id="GO:0016887">
    <property type="term" value="F:ATP hydrolysis activity"/>
    <property type="evidence" value="ECO:0007669"/>
    <property type="project" value="RHEA"/>
</dbReference>
<dbReference type="GO" id="GO:0003723">
    <property type="term" value="F:RNA binding"/>
    <property type="evidence" value="ECO:0007669"/>
    <property type="project" value="UniProtKB-KW"/>
</dbReference>
<dbReference type="GO" id="GO:0003724">
    <property type="term" value="F:RNA helicase activity"/>
    <property type="evidence" value="ECO:0007669"/>
    <property type="project" value="UniProtKB-EC"/>
</dbReference>
<dbReference type="GO" id="GO:0006364">
    <property type="term" value="P:rRNA processing"/>
    <property type="evidence" value="ECO:0007669"/>
    <property type="project" value="UniProtKB-KW"/>
</dbReference>
<dbReference type="CDD" id="cd18045">
    <property type="entry name" value="DEADc_EIF4AIII_DDX48"/>
    <property type="match status" value="1"/>
</dbReference>
<dbReference type="CDD" id="cd18787">
    <property type="entry name" value="SF2_C_DEAD"/>
    <property type="match status" value="1"/>
</dbReference>
<dbReference type="FunFam" id="3.40.50.300:FF:000031">
    <property type="entry name" value="Eukaryotic initiation factor 4A-III"/>
    <property type="match status" value="1"/>
</dbReference>
<dbReference type="FunFam" id="3.40.50.300:FF:000498">
    <property type="entry name" value="Eukaryotic initiation factor 4A-III"/>
    <property type="match status" value="1"/>
</dbReference>
<dbReference type="Gene3D" id="3.40.50.300">
    <property type="entry name" value="P-loop containing nucleotide triphosphate hydrolases"/>
    <property type="match status" value="2"/>
</dbReference>
<dbReference type="InterPro" id="IPR011545">
    <property type="entry name" value="DEAD/DEAH_box_helicase_dom"/>
</dbReference>
<dbReference type="InterPro" id="IPR014001">
    <property type="entry name" value="Helicase_ATP-bd"/>
</dbReference>
<dbReference type="InterPro" id="IPR001650">
    <property type="entry name" value="Helicase_C-like"/>
</dbReference>
<dbReference type="InterPro" id="IPR027417">
    <property type="entry name" value="P-loop_NTPase"/>
</dbReference>
<dbReference type="InterPro" id="IPR000629">
    <property type="entry name" value="RNA-helicase_DEAD-box_CS"/>
</dbReference>
<dbReference type="InterPro" id="IPR014014">
    <property type="entry name" value="RNA_helicase_DEAD_Q_motif"/>
</dbReference>
<dbReference type="PANTHER" id="PTHR47958">
    <property type="entry name" value="ATP-DEPENDENT RNA HELICASE DBP3"/>
    <property type="match status" value="1"/>
</dbReference>
<dbReference type="Pfam" id="PF00270">
    <property type="entry name" value="DEAD"/>
    <property type="match status" value="1"/>
</dbReference>
<dbReference type="Pfam" id="PF00271">
    <property type="entry name" value="Helicase_C"/>
    <property type="match status" value="1"/>
</dbReference>
<dbReference type="SMART" id="SM00487">
    <property type="entry name" value="DEXDc"/>
    <property type="match status" value="1"/>
</dbReference>
<dbReference type="SMART" id="SM00490">
    <property type="entry name" value="HELICc"/>
    <property type="match status" value="1"/>
</dbReference>
<dbReference type="SUPFAM" id="SSF52540">
    <property type="entry name" value="P-loop containing nucleoside triphosphate hydrolases"/>
    <property type="match status" value="1"/>
</dbReference>
<dbReference type="PROSITE" id="PS00039">
    <property type="entry name" value="DEAD_ATP_HELICASE"/>
    <property type="match status" value="1"/>
</dbReference>
<dbReference type="PROSITE" id="PS51192">
    <property type="entry name" value="HELICASE_ATP_BIND_1"/>
    <property type="match status" value="1"/>
</dbReference>
<dbReference type="PROSITE" id="PS51194">
    <property type="entry name" value="HELICASE_CTER"/>
    <property type="match status" value="1"/>
</dbReference>
<dbReference type="PROSITE" id="PS51195">
    <property type="entry name" value="Q_MOTIF"/>
    <property type="match status" value="1"/>
</dbReference>
<organism>
    <name type="scientific">Pyricularia oryzae (strain 70-15 / ATCC MYA-4617 / FGSC 8958)</name>
    <name type="common">Rice blast fungus</name>
    <name type="synonym">Magnaporthe oryzae</name>
    <dbReference type="NCBI Taxonomy" id="242507"/>
    <lineage>
        <taxon>Eukaryota</taxon>
        <taxon>Fungi</taxon>
        <taxon>Dikarya</taxon>
        <taxon>Ascomycota</taxon>
        <taxon>Pezizomycotina</taxon>
        <taxon>Sordariomycetes</taxon>
        <taxon>Sordariomycetidae</taxon>
        <taxon>Magnaporthales</taxon>
        <taxon>Pyriculariaceae</taxon>
        <taxon>Pyricularia</taxon>
    </lineage>
</organism>
<comment type="function">
    <text evidence="1">ATP-dependent RNA helicase involved in 40S ribosomal subunit biogenesis. Required for the processing and cleavage of 35S pre-rRNA at sites A0, A1, and A2, leading to mature 18S rRNA (By similarity).</text>
</comment>
<comment type="catalytic activity">
    <reaction>
        <text>ATP + H2O = ADP + phosphate + H(+)</text>
        <dbReference type="Rhea" id="RHEA:13065"/>
        <dbReference type="ChEBI" id="CHEBI:15377"/>
        <dbReference type="ChEBI" id="CHEBI:15378"/>
        <dbReference type="ChEBI" id="CHEBI:30616"/>
        <dbReference type="ChEBI" id="CHEBI:43474"/>
        <dbReference type="ChEBI" id="CHEBI:456216"/>
        <dbReference type="EC" id="3.6.4.13"/>
    </reaction>
</comment>
<comment type="subcellular location">
    <subcellularLocation>
        <location evidence="1">Nucleus</location>
        <location evidence="1">Nucleolus</location>
    </subcellularLocation>
</comment>
<comment type="domain">
    <text>The Q motif is unique to and characteristic of the DEAD box family of RNA helicases and controls ATP binding and hydrolysis.</text>
</comment>
<comment type="similarity">
    <text evidence="4">Belongs to the DEAD box helicase family. DDX48/FAL1 subfamily.</text>
</comment>
<reference key="1">
    <citation type="journal article" date="2005" name="Nature">
        <title>The genome sequence of the rice blast fungus Magnaporthe grisea.</title>
        <authorList>
            <person name="Dean R.A."/>
            <person name="Talbot N.J."/>
            <person name="Ebbole D.J."/>
            <person name="Farman M.L."/>
            <person name="Mitchell T.K."/>
            <person name="Orbach M.J."/>
            <person name="Thon M.R."/>
            <person name="Kulkarni R."/>
            <person name="Xu J.-R."/>
            <person name="Pan H."/>
            <person name="Read N.D."/>
            <person name="Lee Y.-H."/>
            <person name="Carbone I."/>
            <person name="Brown D."/>
            <person name="Oh Y.Y."/>
            <person name="Donofrio N."/>
            <person name="Jeong J.S."/>
            <person name="Soanes D.M."/>
            <person name="Djonovic S."/>
            <person name="Kolomiets E."/>
            <person name="Rehmeyer C."/>
            <person name="Li W."/>
            <person name="Harding M."/>
            <person name="Kim S."/>
            <person name="Lebrun M.-H."/>
            <person name="Bohnert H."/>
            <person name="Coughlan S."/>
            <person name="Butler J."/>
            <person name="Calvo S.E."/>
            <person name="Ma L.-J."/>
            <person name="Nicol R."/>
            <person name="Purcell S."/>
            <person name="Nusbaum C."/>
            <person name="Galagan J.E."/>
            <person name="Birren B.W."/>
        </authorList>
    </citation>
    <scope>NUCLEOTIDE SEQUENCE [LARGE SCALE GENOMIC DNA]</scope>
    <source>
        <strain>70-15 / ATCC MYA-4617 / FGSC 8958</strain>
    </source>
</reference>
<accession>A4QU31</accession>
<accession>G4N2Q6</accession>
<protein>
    <recommendedName>
        <fullName>ATP-dependent RNA helicase FAL1</fullName>
        <ecNumber>3.6.4.13</ecNumber>
    </recommendedName>
</protein>
<name>FAL1_PYRO7</name>
<proteinExistence type="inferred from homology"/>
<feature type="chain" id="PRO_0000294609" description="ATP-dependent RNA helicase FAL1">
    <location>
        <begin position="1"/>
        <end position="401"/>
    </location>
</feature>
<feature type="domain" description="Helicase ATP-binding" evidence="2">
    <location>
        <begin position="58"/>
        <end position="228"/>
    </location>
</feature>
<feature type="domain" description="Helicase C-terminal" evidence="3">
    <location>
        <begin position="239"/>
        <end position="400"/>
    </location>
</feature>
<feature type="short sequence motif" description="Q motif">
    <location>
        <begin position="27"/>
        <end position="55"/>
    </location>
</feature>
<feature type="short sequence motif" description="DEAD box">
    <location>
        <begin position="176"/>
        <end position="179"/>
    </location>
</feature>
<feature type="binding site" evidence="2">
    <location>
        <begin position="71"/>
        <end position="78"/>
    </location>
    <ligand>
        <name>ATP</name>
        <dbReference type="ChEBI" id="CHEBI:30616"/>
    </ligand>
</feature>